<comment type="function">
    <text evidence="1">Acts as a chaperone.</text>
</comment>
<comment type="induction">
    <text evidence="1">By stress conditions e.g. heat shock.</text>
</comment>
<comment type="similarity">
    <text evidence="1">Belongs to the heat shock protein 70 family.</text>
</comment>
<sequence length="596" mass="66052">MAEKKEFVVGIDLGTTNSVIAWMKPDGTVEVIPNAEGSRVTPSVVAFTKSGEILVGEPAKRQMILNPERTIKSIKRKMGTDYKVRIDDKEYTPQEISAFILKKLKNDAEAYLGGEIKKAVITCPAYFNDAQRQATKEAGIIAGLEVLRIINEPTAAALAYGLDKAGKEEKVLVYDLGGGTFDVSILEIGEGVIEVIATAGNNHLGGDDFDQRLIDWMAEEFKKQHGIDLREDRQALQRLRDAAEKAKIELSTKMETDVSLPFIAVSPSGQPLHLEMRITRSLFESLTRDLVEMTRGPIEQALNDAKLSPQDIDEIILVGGMTRVPMVQRFIKEFFGKEPNKSVNPDEAVAIGAAIQAAILAGTEGAKGRDIVLVDVTPLTLGIEVKGGLFEPIIPRNTKIPVRKSKIFTTVEDGQTEVEIRVYQGERPIARENIFLGSFKLVGIPPAPRGVPQIEVTFDIDSDGIVHVSAKDLGSGKEQSMVVTGRHKLSEDEIKRMIEDAKRYEEQDKRLKEEIELKNRADDLAYSVEKTLKEHGDKIPADLKSRLEDMIRELRDAINRNDIPKVKMLFDDLQKESMKIGEYLYKSATGGETSNQ</sequence>
<feature type="chain" id="PRO_1000119769" description="Chaperone protein DnaK">
    <location>
        <begin position="1"/>
        <end position="596"/>
    </location>
</feature>
<feature type="modified residue" description="Phosphothreonine; by autocatalysis" evidence="1">
    <location>
        <position position="180"/>
    </location>
</feature>
<reference key="1">
    <citation type="journal article" date="2011" name="J. Bacteriol.">
        <title>Genome sequence of Thermotoga sp. strain RQ2, a hyperthermophilic bacterium isolated from a geothermally heated region of the seafloor near Ribeira Quente, the Azores.</title>
        <authorList>
            <person name="Swithers K.S."/>
            <person name="DiPippo J.L."/>
            <person name="Bruce D.C."/>
            <person name="Detter C."/>
            <person name="Tapia R."/>
            <person name="Han S."/>
            <person name="Saunders E."/>
            <person name="Goodwin L.A."/>
            <person name="Han J."/>
            <person name="Woyke T."/>
            <person name="Pitluck S."/>
            <person name="Pennacchio L."/>
            <person name="Nolan M."/>
            <person name="Mikhailova N."/>
            <person name="Lykidis A."/>
            <person name="Land M.L."/>
            <person name="Brettin T."/>
            <person name="Stetter K.O."/>
            <person name="Nelson K.E."/>
            <person name="Gogarten J.P."/>
            <person name="Noll K.M."/>
        </authorList>
    </citation>
    <scope>NUCLEOTIDE SEQUENCE [LARGE SCALE GENOMIC DNA]</scope>
    <source>
        <strain>RQ2</strain>
    </source>
</reference>
<organism>
    <name type="scientific">Thermotoga sp. (strain RQ2)</name>
    <dbReference type="NCBI Taxonomy" id="126740"/>
    <lineage>
        <taxon>Bacteria</taxon>
        <taxon>Thermotogati</taxon>
        <taxon>Thermotogota</taxon>
        <taxon>Thermotogae</taxon>
        <taxon>Thermotogales</taxon>
        <taxon>Thermotogaceae</taxon>
        <taxon>Thermotoga</taxon>
    </lineage>
</organism>
<gene>
    <name evidence="1" type="primary">dnaK</name>
    <name type="ordered locus">TRQ2_0558</name>
</gene>
<proteinExistence type="inferred from homology"/>
<keyword id="KW-0067">ATP-binding</keyword>
<keyword id="KW-0143">Chaperone</keyword>
<keyword id="KW-0547">Nucleotide-binding</keyword>
<keyword id="KW-0597">Phosphoprotein</keyword>
<keyword id="KW-0346">Stress response</keyword>
<protein>
    <recommendedName>
        <fullName evidence="1">Chaperone protein DnaK</fullName>
    </recommendedName>
    <alternativeName>
        <fullName evidence="1">HSP70</fullName>
    </alternativeName>
    <alternativeName>
        <fullName evidence="1">Heat shock 70 kDa protein</fullName>
    </alternativeName>
    <alternativeName>
        <fullName evidence="1">Heat shock protein 70</fullName>
    </alternativeName>
</protein>
<accession>B1L9B4</accession>
<name>DNAK_THESQ</name>
<evidence type="ECO:0000255" key="1">
    <source>
        <dbReference type="HAMAP-Rule" id="MF_00332"/>
    </source>
</evidence>
<dbReference type="EMBL" id="CP000969">
    <property type="protein sequence ID" value="ACB08912.1"/>
    <property type="molecule type" value="Genomic_DNA"/>
</dbReference>
<dbReference type="RefSeq" id="WP_004083187.1">
    <property type="nucleotide sequence ID" value="NC_010483.1"/>
</dbReference>
<dbReference type="SMR" id="B1L9B4"/>
<dbReference type="KEGG" id="trq:TRQ2_0558"/>
<dbReference type="HOGENOM" id="CLU_005965_2_4_0"/>
<dbReference type="Proteomes" id="UP000001687">
    <property type="component" value="Chromosome"/>
</dbReference>
<dbReference type="GO" id="GO:0005524">
    <property type="term" value="F:ATP binding"/>
    <property type="evidence" value="ECO:0007669"/>
    <property type="project" value="UniProtKB-UniRule"/>
</dbReference>
<dbReference type="GO" id="GO:0140662">
    <property type="term" value="F:ATP-dependent protein folding chaperone"/>
    <property type="evidence" value="ECO:0007669"/>
    <property type="project" value="InterPro"/>
</dbReference>
<dbReference type="GO" id="GO:0051082">
    <property type="term" value="F:unfolded protein binding"/>
    <property type="evidence" value="ECO:0007669"/>
    <property type="project" value="InterPro"/>
</dbReference>
<dbReference type="CDD" id="cd10234">
    <property type="entry name" value="ASKHA_NBD_HSP70_DnaK-like"/>
    <property type="match status" value="1"/>
</dbReference>
<dbReference type="FunFam" id="3.30.30.30:FF:000014">
    <property type="entry name" value="Chaperone protein DnaK"/>
    <property type="match status" value="1"/>
</dbReference>
<dbReference type="FunFam" id="2.60.34.10:FF:000014">
    <property type="entry name" value="Chaperone protein DnaK HSP70"/>
    <property type="match status" value="1"/>
</dbReference>
<dbReference type="FunFam" id="1.20.1270.10:FF:000001">
    <property type="entry name" value="Molecular chaperone DnaK"/>
    <property type="match status" value="1"/>
</dbReference>
<dbReference type="FunFam" id="3.30.420.40:FF:000071">
    <property type="entry name" value="Molecular chaperone DnaK"/>
    <property type="match status" value="1"/>
</dbReference>
<dbReference type="FunFam" id="3.90.640.10:FF:000003">
    <property type="entry name" value="Molecular chaperone DnaK"/>
    <property type="match status" value="1"/>
</dbReference>
<dbReference type="Gene3D" id="1.20.1270.10">
    <property type="match status" value="1"/>
</dbReference>
<dbReference type="Gene3D" id="3.30.30.30">
    <property type="match status" value="1"/>
</dbReference>
<dbReference type="Gene3D" id="3.30.420.40">
    <property type="match status" value="3"/>
</dbReference>
<dbReference type="Gene3D" id="3.90.640.10">
    <property type="entry name" value="Actin, Chain A, domain 4"/>
    <property type="match status" value="1"/>
</dbReference>
<dbReference type="Gene3D" id="2.60.34.10">
    <property type="entry name" value="Substrate Binding Domain Of DNAk, Chain A, domain 1"/>
    <property type="match status" value="1"/>
</dbReference>
<dbReference type="HAMAP" id="MF_00332">
    <property type="entry name" value="DnaK"/>
    <property type="match status" value="1"/>
</dbReference>
<dbReference type="InterPro" id="IPR043129">
    <property type="entry name" value="ATPase_NBD"/>
</dbReference>
<dbReference type="InterPro" id="IPR012725">
    <property type="entry name" value="Chaperone_DnaK"/>
</dbReference>
<dbReference type="InterPro" id="IPR018181">
    <property type="entry name" value="Heat_shock_70_CS"/>
</dbReference>
<dbReference type="InterPro" id="IPR029048">
    <property type="entry name" value="HSP70_C_sf"/>
</dbReference>
<dbReference type="InterPro" id="IPR029047">
    <property type="entry name" value="HSP70_peptide-bd_sf"/>
</dbReference>
<dbReference type="InterPro" id="IPR013126">
    <property type="entry name" value="Hsp_70_fam"/>
</dbReference>
<dbReference type="NCBIfam" id="NF001413">
    <property type="entry name" value="PRK00290.1"/>
    <property type="match status" value="1"/>
</dbReference>
<dbReference type="NCBIfam" id="TIGR02350">
    <property type="entry name" value="prok_dnaK"/>
    <property type="match status" value="1"/>
</dbReference>
<dbReference type="PANTHER" id="PTHR19375">
    <property type="entry name" value="HEAT SHOCK PROTEIN 70KDA"/>
    <property type="match status" value="1"/>
</dbReference>
<dbReference type="Pfam" id="PF00012">
    <property type="entry name" value="HSP70"/>
    <property type="match status" value="1"/>
</dbReference>
<dbReference type="PRINTS" id="PR00301">
    <property type="entry name" value="HEATSHOCK70"/>
</dbReference>
<dbReference type="SUPFAM" id="SSF53067">
    <property type="entry name" value="Actin-like ATPase domain"/>
    <property type="match status" value="2"/>
</dbReference>
<dbReference type="SUPFAM" id="SSF100920">
    <property type="entry name" value="Heat shock protein 70kD (HSP70), peptide-binding domain"/>
    <property type="match status" value="1"/>
</dbReference>
<dbReference type="PROSITE" id="PS00297">
    <property type="entry name" value="HSP70_1"/>
    <property type="match status" value="1"/>
</dbReference>
<dbReference type="PROSITE" id="PS00329">
    <property type="entry name" value="HSP70_2"/>
    <property type="match status" value="1"/>
</dbReference>
<dbReference type="PROSITE" id="PS01036">
    <property type="entry name" value="HSP70_3"/>
    <property type="match status" value="1"/>
</dbReference>